<reference key="1">
    <citation type="journal article" date="2011" name="MBio">
        <title>Novel metabolic attributes of the genus Cyanothece, comprising a group of unicellular nitrogen-fixing Cyanobacteria.</title>
        <authorList>
            <person name="Bandyopadhyay A."/>
            <person name="Elvitigala T."/>
            <person name="Welsh E."/>
            <person name="Stockel J."/>
            <person name="Liberton M."/>
            <person name="Min H."/>
            <person name="Sherman L.A."/>
            <person name="Pakrasi H.B."/>
        </authorList>
    </citation>
    <scope>NUCLEOTIDE SEQUENCE [LARGE SCALE GENOMIC DNA]</scope>
    <source>
        <strain>PCC 7424</strain>
    </source>
</reference>
<accession>B7K765</accession>
<name>TSAD_GLOC7</name>
<sequence>MATILSIETSCDETAVAIVKNRNIYSNIVASQIDLHQTYGGVVPEVASRQHLETINPCLEQAFIEANLNWSDIDGIAATVAPGLIGALMVGVSAAKTLSILYQKPFIGVHHLEGHIYASYLSEPDLQPPFLCLLVSGGHTSLIYVKDCGIYEMLGSTRDDAAGEAFDKVARLLQLSYPGGPIIDRMAQTGNPHAFSLPEGRVSLPEGGYHPYDSSFSGLKTAVLRLVQKLEQDHLSLPVHDLAASFQETVARSLTKKTITCALDYNLTTIAVGGGVGANSALRKHLTSAATEHNLKVFFPPLKLCTDNAAMIGCAAADHFNRGHFSPLSIGVQSRLPITEVMKLYQ</sequence>
<gene>
    <name evidence="1" type="primary">tsaD</name>
    <name type="synonym">gcp</name>
    <name type="ordered locus">PCC7424_1182</name>
</gene>
<proteinExistence type="inferred from homology"/>
<comment type="function">
    <text evidence="1">Required for the formation of a threonylcarbamoyl group on adenosine at position 37 (t(6)A37) in tRNAs that read codons beginning with adenine. Is involved in the transfer of the threonylcarbamoyl moiety of threonylcarbamoyl-AMP (TC-AMP) to the N6 group of A37, together with TsaE and TsaB. TsaD likely plays a direct catalytic role in this reaction.</text>
</comment>
<comment type="catalytic activity">
    <reaction evidence="1">
        <text>L-threonylcarbamoyladenylate + adenosine(37) in tRNA = N(6)-L-threonylcarbamoyladenosine(37) in tRNA + AMP + H(+)</text>
        <dbReference type="Rhea" id="RHEA:37059"/>
        <dbReference type="Rhea" id="RHEA-COMP:10162"/>
        <dbReference type="Rhea" id="RHEA-COMP:10163"/>
        <dbReference type="ChEBI" id="CHEBI:15378"/>
        <dbReference type="ChEBI" id="CHEBI:73682"/>
        <dbReference type="ChEBI" id="CHEBI:74411"/>
        <dbReference type="ChEBI" id="CHEBI:74418"/>
        <dbReference type="ChEBI" id="CHEBI:456215"/>
        <dbReference type="EC" id="2.3.1.234"/>
    </reaction>
</comment>
<comment type="cofactor">
    <cofactor evidence="1">
        <name>Fe(2+)</name>
        <dbReference type="ChEBI" id="CHEBI:29033"/>
    </cofactor>
    <text evidence="1">Binds 1 Fe(2+) ion per subunit.</text>
</comment>
<comment type="subcellular location">
    <subcellularLocation>
        <location evidence="1">Cytoplasm</location>
    </subcellularLocation>
</comment>
<comment type="similarity">
    <text evidence="1">Belongs to the KAE1 / TsaD family.</text>
</comment>
<protein>
    <recommendedName>
        <fullName evidence="1">tRNA N6-adenosine threonylcarbamoyltransferase</fullName>
        <ecNumber evidence="1">2.3.1.234</ecNumber>
    </recommendedName>
    <alternativeName>
        <fullName evidence="1">N6-L-threonylcarbamoyladenine synthase</fullName>
        <shortName evidence="1">t(6)A synthase</shortName>
    </alternativeName>
    <alternativeName>
        <fullName evidence="1">t(6)A37 threonylcarbamoyladenosine biosynthesis protein TsaD</fullName>
    </alternativeName>
    <alternativeName>
        <fullName evidence="1">tRNA threonylcarbamoyladenosine biosynthesis protein TsaD</fullName>
    </alternativeName>
</protein>
<keyword id="KW-0012">Acyltransferase</keyword>
<keyword id="KW-0963">Cytoplasm</keyword>
<keyword id="KW-0408">Iron</keyword>
<keyword id="KW-0479">Metal-binding</keyword>
<keyword id="KW-1185">Reference proteome</keyword>
<keyword id="KW-0808">Transferase</keyword>
<keyword id="KW-0819">tRNA processing</keyword>
<feature type="chain" id="PRO_1000145970" description="tRNA N6-adenosine threonylcarbamoyltransferase">
    <location>
        <begin position="1"/>
        <end position="346"/>
    </location>
</feature>
<feature type="binding site" evidence="1">
    <location>
        <position position="111"/>
    </location>
    <ligand>
        <name>Fe cation</name>
        <dbReference type="ChEBI" id="CHEBI:24875"/>
    </ligand>
</feature>
<feature type="binding site" evidence="1">
    <location>
        <position position="115"/>
    </location>
    <ligand>
        <name>Fe cation</name>
        <dbReference type="ChEBI" id="CHEBI:24875"/>
    </ligand>
</feature>
<feature type="binding site" evidence="1">
    <location>
        <begin position="134"/>
        <end position="138"/>
    </location>
    <ligand>
        <name>substrate</name>
    </ligand>
</feature>
<feature type="binding site" evidence="1">
    <location>
        <position position="167"/>
    </location>
    <ligand>
        <name>substrate</name>
    </ligand>
</feature>
<feature type="binding site" evidence="1">
    <location>
        <position position="180"/>
    </location>
    <ligand>
        <name>substrate</name>
    </ligand>
</feature>
<feature type="binding site" evidence="1">
    <location>
        <position position="184"/>
    </location>
    <ligand>
        <name>substrate</name>
    </ligand>
</feature>
<feature type="binding site" evidence="1">
    <location>
        <position position="279"/>
    </location>
    <ligand>
        <name>substrate</name>
    </ligand>
</feature>
<feature type="binding site" evidence="1">
    <location>
        <position position="307"/>
    </location>
    <ligand>
        <name>Fe cation</name>
        <dbReference type="ChEBI" id="CHEBI:24875"/>
    </ligand>
</feature>
<organism>
    <name type="scientific">Gloeothece citriformis (strain PCC 7424)</name>
    <name type="common">Cyanothece sp. (strain PCC 7424)</name>
    <dbReference type="NCBI Taxonomy" id="65393"/>
    <lineage>
        <taxon>Bacteria</taxon>
        <taxon>Bacillati</taxon>
        <taxon>Cyanobacteriota</taxon>
        <taxon>Cyanophyceae</taxon>
        <taxon>Oscillatoriophycideae</taxon>
        <taxon>Chroococcales</taxon>
        <taxon>Aphanothecaceae</taxon>
        <taxon>Gloeothece</taxon>
        <taxon>Gloeothece citriformis</taxon>
    </lineage>
</organism>
<evidence type="ECO:0000255" key="1">
    <source>
        <dbReference type="HAMAP-Rule" id="MF_01445"/>
    </source>
</evidence>
<dbReference type="EC" id="2.3.1.234" evidence="1"/>
<dbReference type="EMBL" id="CP001291">
    <property type="protein sequence ID" value="ACK69633.1"/>
    <property type="molecule type" value="Genomic_DNA"/>
</dbReference>
<dbReference type="RefSeq" id="WP_012598579.1">
    <property type="nucleotide sequence ID" value="NC_011729.1"/>
</dbReference>
<dbReference type="SMR" id="B7K765"/>
<dbReference type="STRING" id="65393.PCC7424_1182"/>
<dbReference type="KEGG" id="cyc:PCC7424_1182"/>
<dbReference type="eggNOG" id="COG0533">
    <property type="taxonomic scope" value="Bacteria"/>
</dbReference>
<dbReference type="HOGENOM" id="CLU_023208_0_2_3"/>
<dbReference type="OrthoDB" id="9806197at2"/>
<dbReference type="Proteomes" id="UP000002384">
    <property type="component" value="Chromosome"/>
</dbReference>
<dbReference type="GO" id="GO:0005737">
    <property type="term" value="C:cytoplasm"/>
    <property type="evidence" value="ECO:0007669"/>
    <property type="project" value="UniProtKB-SubCell"/>
</dbReference>
<dbReference type="GO" id="GO:0005506">
    <property type="term" value="F:iron ion binding"/>
    <property type="evidence" value="ECO:0007669"/>
    <property type="project" value="UniProtKB-UniRule"/>
</dbReference>
<dbReference type="GO" id="GO:0061711">
    <property type="term" value="F:N(6)-L-threonylcarbamoyladenine synthase activity"/>
    <property type="evidence" value="ECO:0007669"/>
    <property type="project" value="UniProtKB-EC"/>
</dbReference>
<dbReference type="GO" id="GO:0002949">
    <property type="term" value="P:tRNA threonylcarbamoyladenosine modification"/>
    <property type="evidence" value="ECO:0007669"/>
    <property type="project" value="UniProtKB-UniRule"/>
</dbReference>
<dbReference type="CDD" id="cd24133">
    <property type="entry name" value="ASKHA_NBD_TsaD_bac"/>
    <property type="match status" value="1"/>
</dbReference>
<dbReference type="FunFam" id="3.30.420.40:FF:000012">
    <property type="entry name" value="tRNA N6-adenosine threonylcarbamoyltransferase"/>
    <property type="match status" value="1"/>
</dbReference>
<dbReference type="FunFam" id="3.30.420.40:FF:000040">
    <property type="entry name" value="tRNA N6-adenosine threonylcarbamoyltransferase"/>
    <property type="match status" value="1"/>
</dbReference>
<dbReference type="Gene3D" id="3.30.420.40">
    <property type="match status" value="2"/>
</dbReference>
<dbReference type="HAMAP" id="MF_01445">
    <property type="entry name" value="TsaD"/>
    <property type="match status" value="1"/>
</dbReference>
<dbReference type="InterPro" id="IPR043129">
    <property type="entry name" value="ATPase_NBD"/>
</dbReference>
<dbReference type="InterPro" id="IPR000905">
    <property type="entry name" value="Gcp-like_dom"/>
</dbReference>
<dbReference type="InterPro" id="IPR017861">
    <property type="entry name" value="KAE1/TsaD"/>
</dbReference>
<dbReference type="InterPro" id="IPR017860">
    <property type="entry name" value="Peptidase_M22_CS"/>
</dbReference>
<dbReference type="InterPro" id="IPR022450">
    <property type="entry name" value="TsaD"/>
</dbReference>
<dbReference type="NCBIfam" id="TIGR00329">
    <property type="entry name" value="gcp_kae1"/>
    <property type="match status" value="1"/>
</dbReference>
<dbReference type="NCBIfam" id="TIGR03723">
    <property type="entry name" value="T6A_TsaD_YgjD"/>
    <property type="match status" value="1"/>
</dbReference>
<dbReference type="PANTHER" id="PTHR11735">
    <property type="entry name" value="TRNA N6-ADENOSINE THREONYLCARBAMOYLTRANSFERASE"/>
    <property type="match status" value="1"/>
</dbReference>
<dbReference type="PANTHER" id="PTHR11735:SF6">
    <property type="entry name" value="TRNA N6-ADENOSINE THREONYLCARBAMOYLTRANSFERASE, MITOCHONDRIAL"/>
    <property type="match status" value="1"/>
</dbReference>
<dbReference type="Pfam" id="PF00814">
    <property type="entry name" value="TsaD"/>
    <property type="match status" value="1"/>
</dbReference>
<dbReference type="PRINTS" id="PR00789">
    <property type="entry name" value="OSIALOPTASE"/>
</dbReference>
<dbReference type="SUPFAM" id="SSF53067">
    <property type="entry name" value="Actin-like ATPase domain"/>
    <property type="match status" value="2"/>
</dbReference>
<dbReference type="PROSITE" id="PS01016">
    <property type="entry name" value="GLYCOPROTEASE"/>
    <property type="match status" value="1"/>
</dbReference>